<comment type="function">
    <text evidence="1">Factor of infectivity and pathogenicity, required for optimal virus replication. Alters numerous pathways of T-lymphocyte function and down-regulates immunity surface molecules in order to evade host defense and increase viral infectivity. Alters the functionality of other immunity cells, like dendritic cells, monocytes/macrophages and NK cells. One of the earliest and most abundantly expressed viral proteins (By similarity).</text>
</comment>
<comment type="function">
    <text evidence="1">In infected CD4(+) T-lymphocytes, down-regulates cell surface expression of CD4, CD28, CD3, and MHC-I or MHC-II molecules.</text>
</comment>
<comment type="function">
    <text>Interferes with TCR signaling from the cell membrane. Interacts with CD247/TCRZ (TCR zeta chain) and exert potent down-regulation of cell surface TCR/CD3 complexes.</text>
</comment>
<comment type="function">
    <text evidence="1">Plays a role in optimizing the host cell environment for viral replication without causing cell death by apoptosis. Protects the infected cells from apoptosis in order to keep them alive until the next virus generation is ready to strike (By similarity).</text>
</comment>
<comment type="function">
    <text evidence="1">Extracellular Nef protein targets CD4(+) T-lymphocytes for apoptosis by interacting with CXCR4 surface receptors.</text>
</comment>
<comment type="subunit">
    <text evidence="1">Homodimer. Interacts with host CD247/TCRZ; this interaction induces down-regulation of cell surface TCR/CD3 complexes.</text>
</comment>
<comment type="subcellular location">
    <subcellularLocation>
        <location evidence="1">Host cell membrane</location>
        <topology evidence="1">Lipid-anchor</topology>
        <orientation evidence="1">Cytoplasmic side</orientation>
    </subcellularLocation>
    <text evidence="1">Associates with the inner plasma membrane through its N-terminal domain.</text>
</comment>
<comment type="domain">
    <text evidence="1">The N-terminal domain is composed of the N-myristoyl glycine and of a cluster of positively charged amino acids. It is required for inner plasma membrane targeting of Nef and virion incorporation, and thereby for infectivity (By similarity).</text>
</comment>
<comment type="similarity">
    <text evidence="3">Belongs to the lentivirus primate group Nef protein family.</text>
</comment>
<organismHost>
    <name type="scientific">Homo sapiens</name>
    <name type="common">Human</name>
    <dbReference type="NCBI Taxonomy" id="9606"/>
</organismHost>
<name>NEF_HV2G1</name>
<reference key="1">
    <citation type="journal article" date="1989" name="AIDS Res. Hum. Retroviruses">
        <title>Genomic divergence of HIV-2 from Ghana.</title>
        <authorList>
            <person name="Hasegawa A."/>
            <person name="Tsujimoto H."/>
            <person name="Maki N."/>
            <person name="Ishikawa K."/>
            <person name="Miura T."/>
            <person name="Fukasawa M."/>
            <person name="Miki K."/>
            <person name="Hayami M."/>
        </authorList>
    </citation>
    <scope>NUCLEOTIDE SEQUENCE [GENOMIC DNA]</scope>
</reference>
<accession>P18038</accession>
<proteinExistence type="inferred from homology"/>
<dbReference type="EMBL" id="M30895">
    <property type="protein sequence ID" value="AAA43937.1"/>
    <property type="molecule type" value="Genomic_DNA"/>
</dbReference>
<dbReference type="PIR" id="JS0335">
    <property type="entry name" value="ASLJGN"/>
</dbReference>
<dbReference type="SMR" id="P18038"/>
<dbReference type="Proteomes" id="UP000007424">
    <property type="component" value="Segment"/>
</dbReference>
<dbReference type="GO" id="GO:0020002">
    <property type="term" value="C:host cell plasma membrane"/>
    <property type="evidence" value="ECO:0007669"/>
    <property type="project" value="UniProtKB-SubCell"/>
</dbReference>
<dbReference type="GO" id="GO:0016020">
    <property type="term" value="C:membrane"/>
    <property type="evidence" value="ECO:0007669"/>
    <property type="project" value="UniProtKB-KW"/>
</dbReference>
<dbReference type="GO" id="GO:0005525">
    <property type="term" value="F:GTP binding"/>
    <property type="evidence" value="ECO:0007669"/>
    <property type="project" value="InterPro"/>
</dbReference>
<dbReference type="Gene3D" id="3.30.62.10">
    <property type="entry name" value="Nef Regulatory Factor"/>
    <property type="match status" value="1"/>
</dbReference>
<dbReference type="InterPro" id="IPR027481">
    <property type="entry name" value="HIV-1_Nef_core_sf"/>
</dbReference>
<dbReference type="InterPro" id="IPR001558">
    <property type="entry name" value="HIV_Nef"/>
</dbReference>
<dbReference type="Pfam" id="PF00469">
    <property type="entry name" value="F-protein"/>
    <property type="match status" value="1"/>
</dbReference>
<dbReference type="SUPFAM" id="SSF55671">
    <property type="entry name" value="Regulatory factor Nef"/>
    <property type="match status" value="1"/>
</dbReference>
<keyword id="KW-0014">AIDS</keyword>
<keyword id="KW-1032">Host cell membrane</keyword>
<keyword id="KW-1043">Host membrane</keyword>
<keyword id="KW-0945">Host-virus interaction</keyword>
<keyword id="KW-0449">Lipoprotein</keyword>
<keyword id="KW-0472">Membrane</keyword>
<keyword id="KW-0519">Myristate</keyword>
<keyword id="KW-0899">Viral immunoevasion</keyword>
<keyword id="KW-0843">Virulence</keyword>
<protein>
    <recommendedName>
        <fullName>Protein Nef</fullName>
    </recommendedName>
    <alternativeName>
        <fullName>3'ORF</fullName>
    </alternativeName>
    <alternativeName>
        <fullName>Negative factor</fullName>
        <shortName>F-protein</shortName>
    </alternativeName>
</protein>
<organism>
    <name type="scientific">Human immunodeficiency virus type 2 subtype A (isolate Ghana-1)</name>
    <name type="common">HIV-2</name>
    <dbReference type="NCBI Taxonomy" id="11717"/>
    <lineage>
        <taxon>Viruses</taxon>
        <taxon>Riboviria</taxon>
        <taxon>Pararnavirae</taxon>
        <taxon>Artverviricota</taxon>
        <taxon>Revtraviricetes</taxon>
        <taxon>Ortervirales</taxon>
        <taxon>Retroviridae</taxon>
        <taxon>Orthoretrovirinae</taxon>
        <taxon>Lentivirus</taxon>
        <taxon>Human immunodeficiency virus 2</taxon>
    </lineage>
</organism>
<feature type="initiator methionine" description="Removed; by host" evidence="1">
    <location>
        <position position="1"/>
    </location>
</feature>
<feature type="chain" id="PRO_0000085233" description="Protein Nef">
    <location>
        <begin position="2"/>
        <end position="255"/>
    </location>
</feature>
<feature type="region of interest" description="Disordered" evidence="2">
    <location>
        <begin position="1"/>
        <end position="70"/>
    </location>
</feature>
<feature type="region of interest" description="Acidic">
    <location>
        <begin position="88"/>
        <end position="96"/>
    </location>
</feature>
<feature type="region of interest" description="Mediates dimerization" evidence="1">
    <location>
        <begin position="139"/>
        <end position="155"/>
    </location>
</feature>
<feature type="short sequence motif" description="PxxP">
    <location>
        <begin position="104"/>
        <end position="107"/>
    </location>
</feature>
<feature type="compositionally biased region" description="Basic residues" evidence="2">
    <location>
        <begin position="1"/>
        <end position="14"/>
    </location>
</feature>
<feature type="compositionally biased region" description="Low complexity" evidence="2">
    <location>
        <begin position="35"/>
        <end position="52"/>
    </location>
</feature>
<feature type="lipid moiety-binding region" description="N-myristoyl glycine; by host" evidence="1">
    <location>
        <position position="2"/>
    </location>
</feature>
<sequence>MGASGSKKHSKHSQRLRERLLRAHGGGYVQQCNASGGEYSQSQEGSGKGQKSPSCEGQQYRQGDFMNTPWRTPAIEGQKKLYKQQNMDDIDSSDDDLVGVPVTPRVPLRAMTYKLAVDMSHFIKKRGLDGMFYSRDRHRILDLYLEKEEGIIPDWQNYTHGPGVRYPMCFGWLWKLVPVDVSQEAEDDETNYLTHPAQTSRHDDEHGETLLWRFDPTLAYDYKAFILHPEEFGHKSGLPEKEWKAKLKARGIPYS</sequence>
<gene>
    <name type="primary">nef</name>
</gene>
<evidence type="ECO:0000250" key="1"/>
<evidence type="ECO:0000256" key="2">
    <source>
        <dbReference type="SAM" id="MobiDB-lite"/>
    </source>
</evidence>
<evidence type="ECO:0000305" key="3"/>